<sequence>MAKTATPGACASDPGSGPLPENYEMALAELEALVARMEGGTLSLEDSLAAYRRGAALVAFCQQQLEKAEQQVRVLDGASLKPLSAGTAAADGEDDDL</sequence>
<evidence type="ECO:0000255" key="1">
    <source>
        <dbReference type="HAMAP-Rule" id="MF_00337"/>
    </source>
</evidence>
<evidence type="ECO:0000256" key="2">
    <source>
        <dbReference type="SAM" id="MobiDB-lite"/>
    </source>
</evidence>
<gene>
    <name evidence="1" type="primary">xseB</name>
    <name type="ordered locus">BURPS668_A2536</name>
</gene>
<reference key="1">
    <citation type="journal article" date="2010" name="Genome Biol. Evol.">
        <title>Continuing evolution of Burkholderia mallei through genome reduction and large-scale rearrangements.</title>
        <authorList>
            <person name="Losada L."/>
            <person name="Ronning C.M."/>
            <person name="DeShazer D."/>
            <person name="Woods D."/>
            <person name="Fedorova N."/>
            <person name="Kim H.S."/>
            <person name="Shabalina S.A."/>
            <person name="Pearson T.R."/>
            <person name="Brinkac L."/>
            <person name="Tan P."/>
            <person name="Nandi T."/>
            <person name="Crabtree J."/>
            <person name="Badger J."/>
            <person name="Beckstrom-Sternberg S."/>
            <person name="Saqib M."/>
            <person name="Schutzer S.E."/>
            <person name="Keim P."/>
            <person name="Nierman W.C."/>
        </authorList>
    </citation>
    <scope>NUCLEOTIDE SEQUENCE [LARGE SCALE GENOMIC DNA]</scope>
    <source>
        <strain>668</strain>
    </source>
</reference>
<proteinExistence type="inferred from homology"/>
<protein>
    <recommendedName>
        <fullName evidence="1">Exodeoxyribonuclease 7 small subunit</fullName>
        <ecNumber evidence="1">3.1.11.6</ecNumber>
    </recommendedName>
    <alternativeName>
        <fullName evidence="1">Exodeoxyribonuclease VII small subunit</fullName>
        <shortName evidence="1">Exonuclease VII small subunit</shortName>
    </alternativeName>
</protein>
<name>EX7S_BURP6</name>
<keyword id="KW-0963">Cytoplasm</keyword>
<keyword id="KW-0269">Exonuclease</keyword>
<keyword id="KW-0378">Hydrolase</keyword>
<keyword id="KW-0540">Nuclease</keyword>
<comment type="function">
    <text evidence="1">Bidirectionally degrades single-stranded DNA into large acid-insoluble oligonucleotides, which are then degraded further into small acid-soluble oligonucleotides.</text>
</comment>
<comment type="catalytic activity">
    <reaction evidence="1">
        <text>Exonucleolytic cleavage in either 5'- to 3'- or 3'- to 5'-direction to yield nucleoside 5'-phosphates.</text>
        <dbReference type="EC" id="3.1.11.6"/>
    </reaction>
</comment>
<comment type="subunit">
    <text evidence="1">Heterooligomer composed of large and small subunits.</text>
</comment>
<comment type="subcellular location">
    <subcellularLocation>
        <location evidence="1">Cytoplasm</location>
    </subcellularLocation>
</comment>
<comment type="similarity">
    <text evidence="1">Belongs to the XseB family.</text>
</comment>
<accession>A3NMF8</accession>
<feature type="chain" id="PRO_1000019573" description="Exodeoxyribonuclease 7 small subunit">
    <location>
        <begin position="1"/>
        <end position="97"/>
    </location>
</feature>
<feature type="region of interest" description="Disordered" evidence="2">
    <location>
        <begin position="1"/>
        <end position="21"/>
    </location>
</feature>
<dbReference type="EC" id="3.1.11.6" evidence="1"/>
<dbReference type="EMBL" id="CP000571">
    <property type="protein sequence ID" value="ABN86231.1"/>
    <property type="molecule type" value="Genomic_DNA"/>
</dbReference>
<dbReference type="RefSeq" id="WP_004190549.1">
    <property type="nucleotide sequence ID" value="NC_009075.1"/>
</dbReference>
<dbReference type="SMR" id="A3NMF8"/>
<dbReference type="KEGG" id="bpd:BURPS668_A2536"/>
<dbReference type="HOGENOM" id="CLU_145918_2_0_4"/>
<dbReference type="GO" id="GO:0005829">
    <property type="term" value="C:cytosol"/>
    <property type="evidence" value="ECO:0007669"/>
    <property type="project" value="TreeGrafter"/>
</dbReference>
<dbReference type="GO" id="GO:0009318">
    <property type="term" value="C:exodeoxyribonuclease VII complex"/>
    <property type="evidence" value="ECO:0007669"/>
    <property type="project" value="InterPro"/>
</dbReference>
<dbReference type="GO" id="GO:0008855">
    <property type="term" value="F:exodeoxyribonuclease VII activity"/>
    <property type="evidence" value="ECO:0007669"/>
    <property type="project" value="UniProtKB-UniRule"/>
</dbReference>
<dbReference type="GO" id="GO:0006308">
    <property type="term" value="P:DNA catabolic process"/>
    <property type="evidence" value="ECO:0007669"/>
    <property type="project" value="UniProtKB-UniRule"/>
</dbReference>
<dbReference type="Gene3D" id="1.10.287.1040">
    <property type="entry name" value="Exonuclease VII, small subunit"/>
    <property type="match status" value="1"/>
</dbReference>
<dbReference type="HAMAP" id="MF_00337">
    <property type="entry name" value="Exonuc_7_S"/>
    <property type="match status" value="1"/>
</dbReference>
<dbReference type="InterPro" id="IPR003761">
    <property type="entry name" value="Exonuc_VII_S"/>
</dbReference>
<dbReference type="InterPro" id="IPR037004">
    <property type="entry name" value="Exonuc_VII_ssu_sf"/>
</dbReference>
<dbReference type="NCBIfam" id="NF002141">
    <property type="entry name" value="PRK00977.1-5"/>
    <property type="match status" value="1"/>
</dbReference>
<dbReference type="NCBIfam" id="TIGR01280">
    <property type="entry name" value="xseB"/>
    <property type="match status" value="1"/>
</dbReference>
<dbReference type="PANTHER" id="PTHR34137">
    <property type="entry name" value="EXODEOXYRIBONUCLEASE 7 SMALL SUBUNIT"/>
    <property type="match status" value="1"/>
</dbReference>
<dbReference type="PANTHER" id="PTHR34137:SF1">
    <property type="entry name" value="EXODEOXYRIBONUCLEASE 7 SMALL SUBUNIT"/>
    <property type="match status" value="1"/>
</dbReference>
<dbReference type="Pfam" id="PF02609">
    <property type="entry name" value="Exonuc_VII_S"/>
    <property type="match status" value="1"/>
</dbReference>
<dbReference type="SUPFAM" id="SSF116842">
    <property type="entry name" value="XseB-like"/>
    <property type="match status" value="1"/>
</dbReference>
<organism>
    <name type="scientific">Burkholderia pseudomallei (strain 668)</name>
    <dbReference type="NCBI Taxonomy" id="320373"/>
    <lineage>
        <taxon>Bacteria</taxon>
        <taxon>Pseudomonadati</taxon>
        <taxon>Pseudomonadota</taxon>
        <taxon>Betaproteobacteria</taxon>
        <taxon>Burkholderiales</taxon>
        <taxon>Burkholderiaceae</taxon>
        <taxon>Burkholderia</taxon>
        <taxon>pseudomallei group</taxon>
    </lineage>
</organism>